<protein>
    <recommendedName>
        <fullName evidence="1">Ribosome-releasing factor 2, mitochondrial</fullName>
        <shortName evidence="1">RRF2mt</shortName>
    </recommendedName>
    <alternativeName>
        <fullName evidence="1">Elongation factor G 2, mitochondrial</fullName>
        <shortName evidence="1">EF-G2mt</shortName>
        <shortName evidence="1">mEF-G 2</shortName>
    </alternativeName>
</protein>
<feature type="transit peptide" description="Mitochondrion" evidence="1">
    <location>
        <begin position="1"/>
        <end position="18"/>
    </location>
</feature>
<feature type="chain" id="PRO_0000385612" description="Ribosome-releasing factor 2, mitochondrial">
    <location>
        <begin position="19"/>
        <end position="807"/>
    </location>
</feature>
<feature type="domain" description="tr-type G">
    <location>
        <begin position="27"/>
        <end position="315"/>
    </location>
</feature>
<feature type="binding site" evidence="1">
    <location>
        <begin position="36"/>
        <end position="43"/>
    </location>
    <ligand>
        <name>GTP</name>
        <dbReference type="ChEBI" id="CHEBI:37565"/>
    </ligand>
</feature>
<feature type="binding site" evidence="1">
    <location>
        <begin position="100"/>
        <end position="104"/>
    </location>
    <ligand>
        <name>GTP</name>
        <dbReference type="ChEBI" id="CHEBI:37565"/>
    </ligand>
</feature>
<feature type="binding site" evidence="1">
    <location>
        <begin position="154"/>
        <end position="157"/>
    </location>
    <ligand>
        <name>GTP</name>
        <dbReference type="ChEBI" id="CHEBI:37565"/>
    </ligand>
</feature>
<organism>
    <name type="scientific">Candida dubliniensis (strain CD36 / ATCC MYA-646 / CBS 7987 / NCPF 3949 / NRRL Y-17841)</name>
    <name type="common">Yeast</name>
    <dbReference type="NCBI Taxonomy" id="573826"/>
    <lineage>
        <taxon>Eukaryota</taxon>
        <taxon>Fungi</taxon>
        <taxon>Dikarya</taxon>
        <taxon>Ascomycota</taxon>
        <taxon>Saccharomycotina</taxon>
        <taxon>Pichiomycetes</taxon>
        <taxon>Debaryomycetaceae</taxon>
        <taxon>Candida/Lodderomyces clade</taxon>
        <taxon>Candida</taxon>
    </lineage>
</organism>
<dbReference type="EMBL" id="FM992688">
    <property type="protein sequence ID" value="CAX44946.1"/>
    <property type="molecule type" value="Genomic_DNA"/>
</dbReference>
<dbReference type="RefSeq" id="XP_002417313.1">
    <property type="nucleotide sequence ID" value="XM_002417268.1"/>
</dbReference>
<dbReference type="SMR" id="B9W892"/>
<dbReference type="GeneID" id="8045535"/>
<dbReference type="KEGG" id="cdu:CD36_06540"/>
<dbReference type="CGD" id="CAL0000170034">
    <property type="gene designation" value="Cd36_06540"/>
</dbReference>
<dbReference type="eggNOG" id="KOG0465">
    <property type="taxonomic scope" value="Eukaryota"/>
</dbReference>
<dbReference type="HOGENOM" id="CLU_002794_4_1_1"/>
<dbReference type="OrthoDB" id="198619at2759"/>
<dbReference type="Proteomes" id="UP000002605">
    <property type="component" value="Chromosome 1"/>
</dbReference>
<dbReference type="GO" id="GO:0005739">
    <property type="term" value="C:mitochondrion"/>
    <property type="evidence" value="ECO:0007669"/>
    <property type="project" value="UniProtKB-SubCell"/>
</dbReference>
<dbReference type="GO" id="GO:0005525">
    <property type="term" value="F:GTP binding"/>
    <property type="evidence" value="ECO:0007669"/>
    <property type="project" value="UniProtKB-UniRule"/>
</dbReference>
<dbReference type="GO" id="GO:0003924">
    <property type="term" value="F:GTPase activity"/>
    <property type="evidence" value="ECO:0007669"/>
    <property type="project" value="UniProtKB-UniRule"/>
</dbReference>
<dbReference type="GO" id="GO:0032543">
    <property type="term" value="P:mitochondrial translation"/>
    <property type="evidence" value="ECO:0007669"/>
    <property type="project" value="UniProtKB-UniRule"/>
</dbReference>
<dbReference type="GO" id="GO:0032790">
    <property type="term" value="P:ribosome disassembly"/>
    <property type="evidence" value="ECO:0007669"/>
    <property type="project" value="UniProtKB-UniRule"/>
</dbReference>
<dbReference type="CDD" id="cd01886">
    <property type="entry name" value="EF-G"/>
    <property type="match status" value="1"/>
</dbReference>
<dbReference type="CDD" id="cd16262">
    <property type="entry name" value="EFG_III"/>
    <property type="match status" value="1"/>
</dbReference>
<dbReference type="CDD" id="cd03713">
    <property type="entry name" value="EFG_mtEFG_C"/>
    <property type="match status" value="1"/>
</dbReference>
<dbReference type="CDD" id="cd04092">
    <property type="entry name" value="mtEFG2_II_like"/>
    <property type="match status" value="1"/>
</dbReference>
<dbReference type="FunFam" id="3.40.50.300:FF:001636">
    <property type="entry name" value="Ribosome-releasing factor 2, mitochondrial"/>
    <property type="match status" value="1"/>
</dbReference>
<dbReference type="Gene3D" id="3.30.70.240">
    <property type="match status" value="1"/>
</dbReference>
<dbReference type="Gene3D" id="3.30.70.870">
    <property type="entry name" value="Elongation Factor G (Translational Gtpase), domain 3"/>
    <property type="match status" value="1"/>
</dbReference>
<dbReference type="Gene3D" id="3.40.50.300">
    <property type="entry name" value="P-loop containing nucleotide triphosphate hydrolases"/>
    <property type="match status" value="1"/>
</dbReference>
<dbReference type="Gene3D" id="2.40.30.10">
    <property type="entry name" value="Translation factors"/>
    <property type="match status" value="1"/>
</dbReference>
<dbReference type="HAMAP" id="MF_03059">
    <property type="entry name" value="mEF_G_2"/>
    <property type="match status" value="1"/>
</dbReference>
<dbReference type="InterPro" id="IPR053905">
    <property type="entry name" value="EF-G-like_DII"/>
</dbReference>
<dbReference type="InterPro" id="IPR030851">
    <property type="entry name" value="EFG2"/>
</dbReference>
<dbReference type="InterPro" id="IPR041095">
    <property type="entry name" value="EFG_II"/>
</dbReference>
<dbReference type="InterPro" id="IPR009022">
    <property type="entry name" value="EFG_III"/>
</dbReference>
<dbReference type="InterPro" id="IPR035647">
    <property type="entry name" value="EFG_III/V"/>
</dbReference>
<dbReference type="InterPro" id="IPR035649">
    <property type="entry name" value="EFG_V"/>
</dbReference>
<dbReference type="InterPro" id="IPR000640">
    <property type="entry name" value="EFG_V-like"/>
</dbReference>
<dbReference type="InterPro" id="IPR031157">
    <property type="entry name" value="G_TR_CS"/>
</dbReference>
<dbReference type="InterPro" id="IPR027417">
    <property type="entry name" value="P-loop_NTPase"/>
</dbReference>
<dbReference type="InterPro" id="IPR005225">
    <property type="entry name" value="Small_GTP-bd"/>
</dbReference>
<dbReference type="InterPro" id="IPR000795">
    <property type="entry name" value="T_Tr_GTP-bd_dom"/>
</dbReference>
<dbReference type="InterPro" id="IPR009000">
    <property type="entry name" value="Transl_B-barrel_sf"/>
</dbReference>
<dbReference type="NCBIfam" id="TIGR00231">
    <property type="entry name" value="small_GTP"/>
    <property type="match status" value="1"/>
</dbReference>
<dbReference type="PANTHER" id="PTHR43261:SF1">
    <property type="entry name" value="RIBOSOME-RELEASING FACTOR 2, MITOCHONDRIAL"/>
    <property type="match status" value="1"/>
</dbReference>
<dbReference type="PANTHER" id="PTHR43261">
    <property type="entry name" value="TRANSLATION ELONGATION FACTOR G-RELATED"/>
    <property type="match status" value="1"/>
</dbReference>
<dbReference type="Pfam" id="PF22042">
    <property type="entry name" value="EF-G_D2"/>
    <property type="match status" value="1"/>
</dbReference>
<dbReference type="Pfam" id="PF00679">
    <property type="entry name" value="EFG_C"/>
    <property type="match status" value="1"/>
</dbReference>
<dbReference type="Pfam" id="PF14492">
    <property type="entry name" value="EFG_III"/>
    <property type="match status" value="1"/>
</dbReference>
<dbReference type="Pfam" id="PF00009">
    <property type="entry name" value="GTP_EFTU"/>
    <property type="match status" value="1"/>
</dbReference>
<dbReference type="PRINTS" id="PR00315">
    <property type="entry name" value="ELONGATNFCT"/>
</dbReference>
<dbReference type="SMART" id="SM00838">
    <property type="entry name" value="EFG_C"/>
    <property type="match status" value="1"/>
</dbReference>
<dbReference type="SUPFAM" id="SSF54980">
    <property type="entry name" value="EF-G C-terminal domain-like"/>
    <property type="match status" value="2"/>
</dbReference>
<dbReference type="SUPFAM" id="SSF52540">
    <property type="entry name" value="P-loop containing nucleoside triphosphate hydrolases"/>
    <property type="match status" value="1"/>
</dbReference>
<dbReference type="SUPFAM" id="SSF50447">
    <property type="entry name" value="Translation proteins"/>
    <property type="match status" value="1"/>
</dbReference>
<dbReference type="PROSITE" id="PS00301">
    <property type="entry name" value="G_TR_1"/>
    <property type="match status" value="1"/>
</dbReference>
<dbReference type="PROSITE" id="PS51722">
    <property type="entry name" value="G_TR_2"/>
    <property type="match status" value="1"/>
</dbReference>
<comment type="function">
    <text evidence="1">Mitochondrial GTPase that mediates the disassembly of ribosomes from messenger RNA at the termination of mitochondrial protein biosynthesis. Not involved in the GTP-dependent ribosomal translocation step during translation elongation.</text>
</comment>
<comment type="subcellular location">
    <subcellularLocation>
        <location evidence="1">Mitochondrion</location>
    </subcellularLocation>
</comment>
<comment type="similarity">
    <text evidence="1">Belongs to the TRAFAC class translation factor GTPase superfamily. Classic translation factor GTPase family. EF-G/EF-2 subfamily.</text>
</comment>
<sequence>MFCRKYAFQTWKQFSRFYSAVNNIRASKTRNIGIIAHIDAGKTTTTERMIYYSGKIKRIGNVDEGDTVTDYLPSERERGITIQSAAITLPWNQHKINIIDTPGHADFTFEVIRSLRVLDGAVTILDAVAGVEAQTEKVWKQASSLNLPKIVYVNKMDRPGAGFSRTVQEVIQKLETRVVLCNLPYFETNKESDLEFKGVIDVIHQKLLKWNEMDANGNEISVVDIDKTTPELLQILEKSRESMVETLGEYDERIIDSFLEHDENYLKIPPILLDQVIRKATIDNYLTPVFCGASFRNIGVQPLMDGITKYLPSPLETSLPEITKNGKEVPKKADDEKGLVVANDNNLTLALAFKVMTHSTRGPMTFVRVYSGKLNAASNLINTRTGKKLLIRKLLVMHGDSPEEVKSISAGNIGVIPGYETDFQTGDTLVSSAVAKRNFTAKDSAYRLLPIDIPPPLFNAAIEPHTAGDEAYMKQCVETLIREDPSLKVHLDEEMGQVVLSGMGELHLDIVRERLVNDMKAKVNLKDVVVSYKESYVGKKEKEAVITDEEIEVVVTLSHTEDARDYIGQEGALVIEGDNNVILLSQTALSEHVQATIDERRWKCENNLEELKEAILNGCLTALQMGGPILGFPLHSTLVTVKRWNAPVEQAQEQALNLMNASRQAVQSLKNEEKDFSILEPIMSIKVYVDSNDLGEVSHDLTQRCKAMIVEIQDQSTQNLETAAWAKDEATKVYVPPDYTIKKNVSKFDDIANKKIIVAETPLREMIGYLSKLRALTQGRATFDMTLIGMRRAVGNRVDSIVEEYKF</sequence>
<evidence type="ECO:0000255" key="1">
    <source>
        <dbReference type="HAMAP-Rule" id="MF_03059"/>
    </source>
</evidence>
<gene>
    <name evidence="1" type="primary">MEF2</name>
    <name type="ORF">CD36_06540</name>
</gene>
<accession>B9W892</accession>
<keyword id="KW-0342">GTP-binding</keyword>
<keyword id="KW-0496">Mitochondrion</keyword>
<keyword id="KW-0547">Nucleotide-binding</keyword>
<keyword id="KW-0648">Protein biosynthesis</keyword>
<keyword id="KW-0809">Transit peptide</keyword>
<name>RRF2M_CANDC</name>
<proteinExistence type="inferred from homology"/>
<reference key="1">
    <citation type="journal article" date="2009" name="Genome Res.">
        <title>Comparative genomics of the fungal pathogens Candida dubliniensis and Candida albicans.</title>
        <authorList>
            <person name="Jackson A.P."/>
            <person name="Gamble J.A."/>
            <person name="Yeomans T."/>
            <person name="Moran G.P."/>
            <person name="Saunders D."/>
            <person name="Harris D."/>
            <person name="Aslett M."/>
            <person name="Barrell J.F."/>
            <person name="Butler G."/>
            <person name="Citiulo F."/>
            <person name="Coleman D.C."/>
            <person name="de Groot P.W.J."/>
            <person name="Goodwin T.J."/>
            <person name="Quail M.A."/>
            <person name="McQuillan J."/>
            <person name="Munro C.A."/>
            <person name="Pain A."/>
            <person name="Poulter R.T."/>
            <person name="Rajandream M.A."/>
            <person name="Renauld H."/>
            <person name="Spiering M.J."/>
            <person name="Tivey A."/>
            <person name="Gow N.A.R."/>
            <person name="Barrell B."/>
            <person name="Sullivan D.J."/>
            <person name="Berriman M."/>
        </authorList>
    </citation>
    <scope>NUCLEOTIDE SEQUENCE [LARGE SCALE GENOMIC DNA]</scope>
    <source>
        <strain>CD36 / ATCC MYA-646 / CBS 7987 / NCPF 3949 / NRRL Y-17841</strain>
    </source>
</reference>